<organism>
    <name type="scientific">Aliivibrio salmonicida (strain LFI1238)</name>
    <name type="common">Vibrio salmonicida (strain LFI1238)</name>
    <dbReference type="NCBI Taxonomy" id="316275"/>
    <lineage>
        <taxon>Bacteria</taxon>
        <taxon>Pseudomonadati</taxon>
        <taxon>Pseudomonadota</taxon>
        <taxon>Gammaproteobacteria</taxon>
        <taxon>Vibrionales</taxon>
        <taxon>Vibrionaceae</taxon>
        <taxon>Aliivibrio</taxon>
    </lineage>
</organism>
<dbReference type="EC" id="6.1.1.14" evidence="1"/>
<dbReference type="EMBL" id="FM178379">
    <property type="protein sequence ID" value="CAQ80649.1"/>
    <property type="molecule type" value="Genomic_DNA"/>
</dbReference>
<dbReference type="RefSeq" id="WP_012551367.1">
    <property type="nucleotide sequence ID" value="NC_011312.1"/>
</dbReference>
<dbReference type="SMR" id="B6EGT3"/>
<dbReference type="KEGG" id="vsa:VSAL_I2965"/>
<dbReference type="eggNOG" id="COG0751">
    <property type="taxonomic scope" value="Bacteria"/>
</dbReference>
<dbReference type="HOGENOM" id="CLU_007220_2_2_6"/>
<dbReference type="Proteomes" id="UP000001730">
    <property type="component" value="Chromosome 1"/>
</dbReference>
<dbReference type="GO" id="GO:0005829">
    <property type="term" value="C:cytosol"/>
    <property type="evidence" value="ECO:0007669"/>
    <property type="project" value="TreeGrafter"/>
</dbReference>
<dbReference type="GO" id="GO:0004814">
    <property type="term" value="F:arginine-tRNA ligase activity"/>
    <property type="evidence" value="ECO:0007669"/>
    <property type="project" value="InterPro"/>
</dbReference>
<dbReference type="GO" id="GO:0005524">
    <property type="term" value="F:ATP binding"/>
    <property type="evidence" value="ECO:0007669"/>
    <property type="project" value="UniProtKB-UniRule"/>
</dbReference>
<dbReference type="GO" id="GO:0004820">
    <property type="term" value="F:glycine-tRNA ligase activity"/>
    <property type="evidence" value="ECO:0007669"/>
    <property type="project" value="UniProtKB-UniRule"/>
</dbReference>
<dbReference type="GO" id="GO:0006420">
    <property type="term" value="P:arginyl-tRNA aminoacylation"/>
    <property type="evidence" value="ECO:0007669"/>
    <property type="project" value="InterPro"/>
</dbReference>
<dbReference type="GO" id="GO:0006426">
    <property type="term" value="P:glycyl-tRNA aminoacylation"/>
    <property type="evidence" value="ECO:0007669"/>
    <property type="project" value="UniProtKB-UniRule"/>
</dbReference>
<dbReference type="HAMAP" id="MF_00255">
    <property type="entry name" value="Gly_tRNA_synth_beta"/>
    <property type="match status" value="1"/>
</dbReference>
<dbReference type="InterPro" id="IPR008909">
    <property type="entry name" value="DALR_anticod-bd"/>
</dbReference>
<dbReference type="InterPro" id="IPR015944">
    <property type="entry name" value="Gly-tRNA-synth_bsu"/>
</dbReference>
<dbReference type="InterPro" id="IPR006194">
    <property type="entry name" value="Gly-tRNA-synth_heterodimer"/>
</dbReference>
<dbReference type="NCBIfam" id="TIGR00211">
    <property type="entry name" value="glyS"/>
    <property type="match status" value="1"/>
</dbReference>
<dbReference type="PANTHER" id="PTHR30075:SF2">
    <property type="entry name" value="GLYCINE--TRNA LIGASE, CHLOROPLASTIC_MITOCHONDRIAL 2"/>
    <property type="match status" value="1"/>
</dbReference>
<dbReference type="PANTHER" id="PTHR30075">
    <property type="entry name" value="GLYCYL-TRNA SYNTHETASE"/>
    <property type="match status" value="1"/>
</dbReference>
<dbReference type="Pfam" id="PF05746">
    <property type="entry name" value="DALR_1"/>
    <property type="match status" value="1"/>
</dbReference>
<dbReference type="Pfam" id="PF02092">
    <property type="entry name" value="tRNA_synt_2f"/>
    <property type="match status" value="1"/>
</dbReference>
<dbReference type="PRINTS" id="PR01045">
    <property type="entry name" value="TRNASYNTHGB"/>
</dbReference>
<dbReference type="SUPFAM" id="SSF109604">
    <property type="entry name" value="HD-domain/PDEase-like"/>
    <property type="match status" value="1"/>
</dbReference>
<dbReference type="PROSITE" id="PS50861">
    <property type="entry name" value="AA_TRNA_LIGASE_II_GLYAB"/>
    <property type="match status" value="1"/>
</dbReference>
<proteinExistence type="inferred from homology"/>
<accession>B6EGT3</accession>
<name>SYGB_ALISL</name>
<feature type="chain" id="PRO_1000101262" description="Glycine--tRNA ligase beta subunit">
    <location>
        <begin position="1"/>
        <end position="688"/>
    </location>
</feature>
<evidence type="ECO:0000255" key="1">
    <source>
        <dbReference type="HAMAP-Rule" id="MF_00255"/>
    </source>
</evidence>
<protein>
    <recommendedName>
        <fullName evidence="1">Glycine--tRNA ligase beta subunit</fullName>
        <ecNumber evidence="1">6.1.1.14</ecNumber>
    </recommendedName>
    <alternativeName>
        <fullName evidence="1">Glycyl-tRNA synthetase beta subunit</fullName>
        <shortName evidence="1">GlyRS</shortName>
    </alternativeName>
</protein>
<comment type="catalytic activity">
    <reaction evidence="1">
        <text>tRNA(Gly) + glycine + ATP = glycyl-tRNA(Gly) + AMP + diphosphate</text>
        <dbReference type="Rhea" id="RHEA:16013"/>
        <dbReference type="Rhea" id="RHEA-COMP:9664"/>
        <dbReference type="Rhea" id="RHEA-COMP:9683"/>
        <dbReference type="ChEBI" id="CHEBI:30616"/>
        <dbReference type="ChEBI" id="CHEBI:33019"/>
        <dbReference type="ChEBI" id="CHEBI:57305"/>
        <dbReference type="ChEBI" id="CHEBI:78442"/>
        <dbReference type="ChEBI" id="CHEBI:78522"/>
        <dbReference type="ChEBI" id="CHEBI:456215"/>
        <dbReference type="EC" id="6.1.1.14"/>
    </reaction>
</comment>
<comment type="subunit">
    <text evidence="1">Tetramer of two alpha and two beta subunits.</text>
</comment>
<comment type="subcellular location">
    <subcellularLocation>
        <location evidence="1">Cytoplasm</location>
    </subcellularLocation>
</comment>
<comment type="similarity">
    <text evidence="1">Belongs to the class-II aminoacyl-tRNA synthetase family.</text>
</comment>
<gene>
    <name evidence="1" type="primary">glyS</name>
    <name type="ordered locus">VSAL_I2965</name>
</gene>
<keyword id="KW-0030">Aminoacyl-tRNA synthetase</keyword>
<keyword id="KW-0067">ATP-binding</keyword>
<keyword id="KW-0963">Cytoplasm</keyword>
<keyword id="KW-0436">Ligase</keyword>
<keyword id="KW-0547">Nucleotide-binding</keyword>
<keyword id="KW-0648">Protein biosynthesis</keyword>
<sequence length="688" mass="75890">MAKNFLIELGTEELPPKALRSLAEAFAANFEAGLKAAGLAHQGIKWYATPRRLALKIAELDEGQADKIVEKRGPAIASAFDADGNPTKAAQGWARGNGITVEQAERLKTDKGEWLLHKEEVKGQPVKGLVVELAAKALAGLPIPKAMRWGNSDIQFIRPVKTLTILLGDELIEGTILGVASTRTIRGHRFMGESEFTIDSADQYPAILEERGKVMADYDARKAIILAGAKKAAEAVGGIADLEDELVEEVTSLVEWPVVLTAKFEQEFLNVPSEALVYTMKGDQKYFPVYDQEKNLLPNFIFVTNIESKEPRHIIEGNEKVVRPRLADAEFFFNTDRKRPLIDRLPELEQAIFQKQLGTIKDKTDRITELAGYIAEQIGADVEKSQRAGLLAKCDLMTSMVFEFTDTQGVMGMHYATHDGEDAQVALALYEQYMPRFAGDDLPSTDVSASVAMADKLDTLVGIFGIGQAPKGSDPFALRRAALGILRIIVEKGYNLDLVDLVAKAQSLFGDKLTNANVDTDVIDFMLGRFRAWYQDEGFSVDIIQAVLARRPTKPADFDQRVKAVSHFRELDAAESLAAANKRVGNILAKFDGELAQEIDLALLQEDAEKVLAEKVEILAEALEPVFIAGNYQEALSRLAELREPVDAFFDGVMVMADDEALKLNRLTLLNKLRNLFLDIADISLLQK</sequence>
<reference key="1">
    <citation type="journal article" date="2008" name="BMC Genomics">
        <title>The genome sequence of the fish pathogen Aliivibrio salmonicida strain LFI1238 shows extensive evidence of gene decay.</title>
        <authorList>
            <person name="Hjerde E."/>
            <person name="Lorentzen M.S."/>
            <person name="Holden M.T."/>
            <person name="Seeger K."/>
            <person name="Paulsen S."/>
            <person name="Bason N."/>
            <person name="Churcher C."/>
            <person name="Harris D."/>
            <person name="Norbertczak H."/>
            <person name="Quail M.A."/>
            <person name="Sanders S."/>
            <person name="Thurston S."/>
            <person name="Parkhill J."/>
            <person name="Willassen N.P."/>
            <person name="Thomson N.R."/>
        </authorList>
    </citation>
    <scope>NUCLEOTIDE SEQUENCE [LARGE SCALE GENOMIC DNA]</scope>
    <source>
        <strain>LFI1238</strain>
    </source>
</reference>